<protein>
    <recommendedName>
        <fullName>Sushi repeat-containing protein SRPX2</fullName>
    </recommendedName>
</protein>
<name>SRPX2_MOUSE</name>
<sequence>MMTSPLTQRGALSLLLLLMPAVTPTWYAGSGYSPDESYNEVYAEEVPAARARALDYRVPRWCYTLNIQDGEATCYSPRGGNYHSSLGTRCELSCDRGFRLIGRKSVQCLPSRRWSGTAYCRQIRCHTLPFITSGTYTCTNGMLLDSRCDYSCSSGYHLEGDRSRICMEDGRWSGGEPVCVDIDPPKIRCPHSREKMAEPEKLTARVYWDPPLVKDSADGTITRVTLRGPEPGSHFPEGEHVIRYTAYDRAYNRASCKFIVKVQVRRCPILKPPQHGYLTCSSAGDNYGAICEYHCDGGYERQGTPSRVCQSSRQWSGTPPVCTPMKINVNVNSAAGLLDQFYEKQRLLIVSAPDPSNRYYKMQISMLQQSTCGLDLRHVTIIELVGQPPQEVGRIREQQLSAGIIEELRQFQRLTRSYFNMVLIDKQGIDRERYMEPVTPEEIFTFIDDYLLSNEELARRVEQRDLCE</sequence>
<evidence type="ECO:0000250" key="1"/>
<evidence type="ECO:0000250" key="2">
    <source>
        <dbReference type="UniProtKB" id="O60687"/>
    </source>
</evidence>
<evidence type="ECO:0000255" key="3"/>
<evidence type="ECO:0000255" key="4">
    <source>
        <dbReference type="PROSITE-ProRule" id="PRU00113"/>
    </source>
</evidence>
<evidence type="ECO:0000255" key="5">
    <source>
        <dbReference type="PROSITE-ProRule" id="PRU00302"/>
    </source>
</evidence>
<evidence type="ECO:0000269" key="6">
    <source>
    </source>
</evidence>
<evidence type="ECO:0000269" key="7">
    <source>
    </source>
</evidence>
<evidence type="ECO:0000305" key="8"/>
<feature type="signal peptide" evidence="3">
    <location>
        <begin position="1"/>
        <end position="25"/>
    </location>
</feature>
<feature type="chain" id="PRO_0000274526" description="Sushi repeat-containing protein SRPX2">
    <location>
        <begin position="26"/>
        <end position="468"/>
    </location>
</feature>
<feature type="domain" description="Sushi 1" evidence="5">
    <location>
        <begin position="72"/>
        <end position="122"/>
    </location>
</feature>
<feature type="domain" description="Sushi 2" evidence="5">
    <location>
        <begin position="123"/>
        <end position="181"/>
    </location>
</feature>
<feature type="domain" description="HYR" evidence="4">
    <location>
        <begin position="180"/>
        <end position="264"/>
    </location>
</feature>
<feature type="domain" description="Sushi 3" evidence="5">
    <location>
        <begin position="265"/>
        <end position="324"/>
    </location>
</feature>
<feature type="disulfide bond" evidence="5">
    <location>
        <begin position="74"/>
        <end position="108"/>
    </location>
</feature>
<feature type="disulfide bond" evidence="5">
    <location>
        <begin position="94"/>
        <end position="120"/>
    </location>
</feature>
<feature type="disulfide bond" evidence="5">
    <location>
        <begin position="125"/>
        <end position="166"/>
    </location>
</feature>
<feature type="disulfide bond" evidence="5">
    <location>
        <begin position="152"/>
        <end position="179"/>
    </location>
</feature>
<feature type="disulfide bond" evidence="5">
    <location>
        <begin position="267"/>
        <end position="309"/>
    </location>
</feature>
<feature type="disulfide bond" evidence="5">
    <location>
        <begin position="295"/>
        <end position="322"/>
    </location>
</feature>
<feature type="sequence conflict" description="In Ref. 1; AAM73691/AAM73690." evidence="8" ref="1">
    <original>P</original>
    <variation>H</variation>
    <location>
        <position position="59"/>
    </location>
</feature>
<feature type="sequence conflict" description="In Ref. 2; BAE23179." evidence="8" ref="2">
    <original>G</original>
    <variation>S</variation>
    <location>
        <position position="403"/>
    </location>
</feature>
<comment type="function">
    <text evidence="6 7">Acts as a ligand for the urokinase plasminogen activator surface receptor. Plays a role in angiogenesis by inducing endothelial cell migration and the formation of vascular network (cords). Involved in cellular migration and adhesion. Increases the phosphorylation levels of FAK. Interacts with and increases the mitogenic activity of HGF. Promotes synapse formation. Required for ultrasonic vocalizations.</text>
</comment>
<comment type="subunit">
    <text evidence="1">Forms homooligomers. Interacts with PLAUR (via the UPAR/Ly6 domains), ADAMTS4 and CTSB. Interacts with HGF; the interaction increases the mitogenic activity of HGF (By similarity).</text>
</comment>
<comment type="subcellular location">
    <subcellularLocation>
        <location evidence="2">Secreted</location>
    </subcellularLocation>
    <subcellularLocation>
        <location evidence="1">Cytoplasm</location>
    </subcellularLocation>
    <subcellularLocation>
        <location evidence="1">Cell surface</location>
    </subcellularLocation>
    <subcellularLocation>
        <location evidence="1">Synapse</location>
    </subcellularLocation>
</comment>
<comment type="tissue specificity">
    <text evidence="6">Expressed in angiogenic endothelial cells (at protein level).</text>
</comment>
<comment type="PTM">
    <text evidence="2">Contains chondroitin sulfate chains.</text>
</comment>
<comment type="sequence caution" evidence="8">
    <conflict type="erroneous initiation">
        <sequence resource="EMBL-CDS" id="AAH28307"/>
    </conflict>
    <text>Truncated N-terminus.</text>
</comment>
<comment type="sequence caution" evidence="8">
    <conflict type="erroneous initiation">
        <sequence resource="EMBL-CDS" id="BAE23179"/>
    </conflict>
    <text>Truncated N-terminus.</text>
</comment>
<organism>
    <name type="scientific">Mus musculus</name>
    <name type="common">Mouse</name>
    <dbReference type="NCBI Taxonomy" id="10090"/>
    <lineage>
        <taxon>Eukaryota</taxon>
        <taxon>Metazoa</taxon>
        <taxon>Chordata</taxon>
        <taxon>Craniata</taxon>
        <taxon>Vertebrata</taxon>
        <taxon>Euteleostomi</taxon>
        <taxon>Mammalia</taxon>
        <taxon>Eutheria</taxon>
        <taxon>Euarchontoglires</taxon>
        <taxon>Glires</taxon>
        <taxon>Rodentia</taxon>
        <taxon>Myomorpha</taxon>
        <taxon>Muroidea</taxon>
        <taxon>Muridae</taxon>
        <taxon>Murinae</taxon>
        <taxon>Mus</taxon>
        <taxon>Mus</taxon>
    </lineage>
</organism>
<accession>Q8R054</accession>
<accession>B1AVI6</accession>
<accession>Q3UVU0</accession>
<accession>Q8K1F8</accession>
<accession>Q8K4W6</accession>
<keyword id="KW-0037">Angiogenesis</keyword>
<keyword id="KW-0130">Cell adhesion</keyword>
<keyword id="KW-0963">Cytoplasm</keyword>
<keyword id="KW-1015">Disulfide bond</keyword>
<keyword id="KW-0325">Glycoprotein</keyword>
<keyword id="KW-0654">Proteoglycan</keyword>
<keyword id="KW-1185">Reference proteome</keyword>
<keyword id="KW-0677">Repeat</keyword>
<keyword id="KW-0964">Secreted</keyword>
<keyword id="KW-0732">Signal</keyword>
<keyword id="KW-0768">Sushi</keyword>
<keyword id="KW-0770">Synapse</keyword>
<dbReference type="EMBL" id="AF393640">
    <property type="protein sequence ID" value="AAM73691.1"/>
    <property type="molecule type" value="mRNA"/>
</dbReference>
<dbReference type="EMBL" id="AF393647">
    <property type="protein sequence ID" value="AAM73690.1"/>
    <property type="molecule type" value="Genomic_DNA"/>
</dbReference>
<dbReference type="EMBL" id="AF393641">
    <property type="protein sequence ID" value="AAM73690.1"/>
    <property type="status" value="JOINED"/>
    <property type="molecule type" value="Genomic_DNA"/>
</dbReference>
<dbReference type="EMBL" id="AF393642">
    <property type="protein sequence ID" value="AAM73690.1"/>
    <property type="status" value="JOINED"/>
    <property type="molecule type" value="Genomic_DNA"/>
</dbReference>
<dbReference type="EMBL" id="AF393643">
    <property type="protein sequence ID" value="AAM73690.1"/>
    <property type="status" value="JOINED"/>
    <property type="molecule type" value="Genomic_DNA"/>
</dbReference>
<dbReference type="EMBL" id="AF393644">
    <property type="protein sequence ID" value="AAM73690.1"/>
    <property type="status" value="JOINED"/>
    <property type="molecule type" value="Genomic_DNA"/>
</dbReference>
<dbReference type="EMBL" id="AF393645">
    <property type="protein sequence ID" value="AAM73690.1"/>
    <property type="status" value="JOINED"/>
    <property type="molecule type" value="Genomic_DNA"/>
</dbReference>
<dbReference type="EMBL" id="AF393646">
    <property type="protein sequence ID" value="AAM73690.1"/>
    <property type="status" value="JOINED"/>
    <property type="molecule type" value="Genomic_DNA"/>
</dbReference>
<dbReference type="EMBL" id="AK136935">
    <property type="protein sequence ID" value="BAE23179.1"/>
    <property type="status" value="ALT_INIT"/>
    <property type="molecule type" value="mRNA"/>
</dbReference>
<dbReference type="EMBL" id="AL691421">
    <property type="status" value="NOT_ANNOTATED_CDS"/>
    <property type="molecule type" value="Genomic_DNA"/>
</dbReference>
<dbReference type="EMBL" id="BC028307">
    <property type="protein sequence ID" value="AAH28307.1"/>
    <property type="status" value="ALT_INIT"/>
    <property type="molecule type" value="mRNA"/>
</dbReference>
<dbReference type="CCDS" id="CCDS41119.2"/>
<dbReference type="RefSeq" id="NP_001077364.2">
    <property type="nucleotide sequence ID" value="NM_001083895.3"/>
</dbReference>
<dbReference type="RefSeq" id="NP_081114.2">
    <property type="nucleotide sequence ID" value="NM_026838.4"/>
</dbReference>
<dbReference type="SMR" id="Q8R054"/>
<dbReference type="FunCoup" id="Q8R054">
    <property type="interactions" value="24"/>
</dbReference>
<dbReference type="STRING" id="10090.ENSMUSP00000108929"/>
<dbReference type="GlyGen" id="Q8R054">
    <property type="glycosylation" value="1 site"/>
</dbReference>
<dbReference type="iPTMnet" id="Q8R054"/>
<dbReference type="PhosphoSitePlus" id="Q8R054"/>
<dbReference type="jPOST" id="Q8R054"/>
<dbReference type="PaxDb" id="10090-ENSMUSP00000108929"/>
<dbReference type="PeptideAtlas" id="Q8R054"/>
<dbReference type="ProteomicsDB" id="257364"/>
<dbReference type="Antibodypedia" id="28519">
    <property type="antibodies" value="176 antibodies from 31 providers"/>
</dbReference>
<dbReference type="Ensembl" id="ENSMUST00000033606.15">
    <property type="protein sequence ID" value="ENSMUSP00000033606.10"/>
    <property type="gene ID" value="ENSMUSG00000031253.16"/>
</dbReference>
<dbReference type="Ensembl" id="ENSMUST00000113304.2">
    <property type="protein sequence ID" value="ENSMUSP00000108929.3"/>
    <property type="gene ID" value="ENSMUSG00000031253.16"/>
</dbReference>
<dbReference type="GeneID" id="68792"/>
<dbReference type="KEGG" id="mmu:68792"/>
<dbReference type="UCSC" id="uc009ufd.3">
    <property type="organism name" value="mouse"/>
</dbReference>
<dbReference type="AGR" id="MGI:1916042"/>
<dbReference type="CTD" id="27286"/>
<dbReference type="MGI" id="MGI:1916042">
    <property type="gene designation" value="Srpx2"/>
</dbReference>
<dbReference type="VEuPathDB" id="HostDB:ENSMUSG00000031253"/>
<dbReference type="eggNOG" id="ENOG502QREP">
    <property type="taxonomic scope" value="Eukaryota"/>
</dbReference>
<dbReference type="GeneTree" id="ENSGT00940000159149"/>
<dbReference type="HOGENOM" id="CLU_047011_0_0_1"/>
<dbReference type="InParanoid" id="Q8R054"/>
<dbReference type="OMA" id="EQRDMCE"/>
<dbReference type="OrthoDB" id="6136178at2759"/>
<dbReference type="PhylomeDB" id="Q8R054"/>
<dbReference type="TreeFam" id="TF336515"/>
<dbReference type="BioGRID-ORCS" id="68792">
    <property type="hits" value="3 hits in 76 CRISPR screens"/>
</dbReference>
<dbReference type="ChiTaRS" id="Srpx2">
    <property type="organism name" value="mouse"/>
</dbReference>
<dbReference type="PRO" id="PR:Q8R054"/>
<dbReference type="Proteomes" id="UP000000589">
    <property type="component" value="Chromosome X"/>
</dbReference>
<dbReference type="RNAct" id="Q8R054">
    <property type="molecule type" value="protein"/>
</dbReference>
<dbReference type="Bgee" id="ENSMUSG00000031253">
    <property type="expression patterns" value="Expressed in vault of skull and 129 other cell types or tissues"/>
</dbReference>
<dbReference type="GO" id="GO:0009986">
    <property type="term" value="C:cell surface"/>
    <property type="evidence" value="ECO:0000250"/>
    <property type="project" value="UniProtKB"/>
</dbReference>
<dbReference type="GO" id="GO:0062023">
    <property type="term" value="C:collagen-containing extracellular matrix"/>
    <property type="evidence" value="ECO:0007005"/>
    <property type="project" value="BHF-UCL"/>
</dbReference>
<dbReference type="GO" id="GO:0005737">
    <property type="term" value="C:cytoplasm"/>
    <property type="evidence" value="ECO:0000250"/>
    <property type="project" value="UniProtKB"/>
</dbReference>
<dbReference type="GO" id="GO:0060076">
    <property type="term" value="C:excitatory synapse"/>
    <property type="evidence" value="ECO:0000250"/>
    <property type="project" value="UniProtKB"/>
</dbReference>
<dbReference type="GO" id="GO:0005615">
    <property type="term" value="C:extracellular space"/>
    <property type="evidence" value="ECO:0007005"/>
    <property type="project" value="BHF-UCL"/>
</dbReference>
<dbReference type="GO" id="GO:0098978">
    <property type="term" value="C:glutamatergic synapse"/>
    <property type="evidence" value="ECO:0007669"/>
    <property type="project" value="Ensembl"/>
</dbReference>
<dbReference type="GO" id="GO:0097060">
    <property type="term" value="C:synaptic membrane"/>
    <property type="evidence" value="ECO:0000250"/>
    <property type="project" value="UniProtKB"/>
</dbReference>
<dbReference type="GO" id="GO:0036458">
    <property type="term" value="F:hepatocyte growth factor binding"/>
    <property type="evidence" value="ECO:0000250"/>
    <property type="project" value="UniProtKB"/>
</dbReference>
<dbReference type="GO" id="GO:0042802">
    <property type="term" value="F:identical protein binding"/>
    <property type="evidence" value="ECO:0000250"/>
    <property type="project" value="UniProtKB"/>
</dbReference>
<dbReference type="GO" id="GO:0005102">
    <property type="term" value="F:signaling receptor binding"/>
    <property type="evidence" value="ECO:0000353"/>
    <property type="project" value="UniProtKB"/>
</dbReference>
<dbReference type="GO" id="GO:0001525">
    <property type="term" value="P:angiogenesis"/>
    <property type="evidence" value="ECO:0007669"/>
    <property type="project" value="UniProtKB-KW"/>
</dbReference>
<dbReference type="GO" id="GO:0048870">
    <property type="term" value="P:cell motility"/>
    <property type="evidence" value="ECO:0000250"/>
    <property type="project" value="UniProtKB"/>
</dbReference>
<dbReference type="GO" id="GO:0098609">
    <property type="term" value="P:cell-cell adhesion"/>
    <property type="evidence" value="ECO:0000250"/>
    <property type="project" value="UniProtKB"/>
</dbReference>
<dbReference type="GO" id="GO:0090050">
    <property type="term" value="P:positive regulation of cell migration involved in sprouting angiogenesis"/>
    <property type="evidence" value="ECO:0000315"/>
    <property type="project" value="UniProtKB"/>
</dbReference>
<dbReference type="GO" id="GO:0051965">
    <property type="term" value="P:positive regulation of synapse assembly"/>
    <property type="evidence" value="ECO:0000250"/>
    <property type="project" value="UniProtKB"/>
</dbReference>
<dbReference type="GO" id="GO:0042325">
    <property type="term" value="P:regulation of phosphorylation"/>
    <property type="evidence" value="ECO:0000250"/>
    <property type="project" value="UniProtKB"/>
</dbReference>
<dbReference type="GO" id="GO:0071625">
    <property type="term" value="P:vocalization behavior"/>
    <property type="evidence" value="ECO:0000315"/>
    <property type="project" value="UniProtKB"/>
</dbReference>
<dbReference type="CDD" id="cd00033">
    <property type="entry name" value="CCP"/>
    <property type="match status" value="3"/>
</dbReference>
<dbReference type="FunFam" id="2.10.70.10:FF:000024">
    <property type="entry name" value="Sushi repeat-containing protein SRPX"/>
    <property type="match status" value="1"/>
</dbReference>
<dbReference type="FunFam" id="2.10.70.10:FF:000073">
    <property type="entry name" value="Sushi repeat-containing protein SRPX2"/>
    <property type="match status" value="1"/>
</dbReference>
<dbReference type="FunFam" id="2.10.70.10:FF:000058">
    <property type="entry name" value="sushi repeat-containing protein SRPX2"/>
    <property type="match status" value="1"/>
</dbReference>
<dbReference type="Gene3D" id="2.10.70.10">
    <property type="entry name" value="Complement Module, domain 1"/>
    <property type="match status" value="3"/>
</dbReference>
<dbReference type="InterPro" id="IPR025232">
    <property type="entry name" value="DUF4174"/>
</dbReference>
<dbReference type="InterPro" id="IPR003410">
    <property type="entry name" value="HYR_dom"/>
</dbReference>
<dbReference type="InterPro" id="IPR043555">
    <property type="entry name" value="SRPX-like"/>
</dbReference>
<dbReference type="InterPro" id="IPR035976">
    <property type="entry name" value="Sushi/SCR/CCP_sf"/>
</dbReference>
<dbReference type="InterPro" id="IPR000436">
    <property type="entry name" value="Sushi_SCR_CCP_dom"/>
</dbReference>
<dbReference type="PANTHER" id="PTHR46343">
    <property type="entry name" value="HYR DOMAIN-CONTAINING PROTEIN"/>
    <property type="match status" value="1"/>
</dbReference>
<dbReference type="PANTHER" id="PTHR46343:SF3">
    <property type="entry name" value="SUSHI REPEAT-CONTAINING PROTEIN SRPX2"/>
    <property type="match status" value="1"/>
</dbReference>
<dbReference type="Pfam" id="PF13778">
    <property type="entry name" value="DUF4174"/>
    <property type="match status" value="1"/>
</dbReference>
<dbReference type="Pfam" id="PF02494">
    <property type="entry name" value="HYR"/>
    <property type="match status" value="1"/>
</dbReference>
<dbReference type="Pfam" id="PF00084">
    <property type="entry name" value="Sushi"/>
    <property type="match status" value="3"/>
</dbReference>
<dbReference type="SMART" id="SM00032">
    <property type="entry name" value="CCP"/>
    <property type="match status" value="3"/>
</dbReference>
<dbReference type="SUPFAM" id="SSF57535">
    <property type="entry name" value="Complement control module/SCR domain"/>
    <property type="match status" value="3"/>
</dbReference>
<dbReference type="PROSITE" id="PS50825">
    <property type="entry name" value="HYR"/>
    <property type="match status" value="1"/>
</dbReference>
<dbReference type="PROSITE" id="PS50923">
    <property type="entry name" value="SUSHI"/>
    <property type="match status" value="3"/>
</dbReference>
<gene>
    <name type="primary">Srpx2</name>
</gene>
<proteinExistence type="evidence at protein level"/>
<reference key="1">
    <citation type="submission" date="2001-06" db="EMBL/GenBank/DDBJ databases">
        <title>Cloning and characterization of the sushi-repeat containing protein (SRP) as a novel interaction partner of Rh type C glycoprotein (RhCG).</title>
        <authorList>
            <person name="Huang C.-H."/>
            <person name="Chen H."/>
            <person name="Peng J."/>
            <person name="Chen Y."/>
        </authorList>
    </citation>
    <scope>NUCLEOTIDE SEQUENCE [MRNA]</scope>
    <scope>NUCLEOTIDE SEQUENCE [GENOMIC DNA] OF 59-468</scope>
    <source>
        <tissue>Kidney</tissue>
    </source>
</reference>
<reference key="2">
    <citation type="journal article" date="2005" name="Science">
        <title>The transcriptional landscape of the mammalian genome.</title>
        <authorList>
            <person name="Carninci P."/>
            <person name="Kasukawa T."/>
            <person name="Katayama S."/>
            <person name="Gough J."/>
            <person name="Frith M.C."/>
            <person name="Maeda N."/>
            <person name="Oyama R."/>
            <person name="Ravasi T."/>
            <person name="Lenhard B."/>
            <person name="Wells C."/>
            <person name="Kodzius R."/>
            <person name="Shimokawa K."/>
            <person name="Bajic V.B."/>
            <person name="Brenner S.E."/>
            <person name="Batalov S."/>
            <person name="Forrest A.R."/>
            <person name="Zavolan M."/>
            <person name="Davis M.J."/>
            <person name="Wilming L.G."/>
            <person name="Aidinis V."/>
            <person name="Allen J.E."/>
            <person name="Ambesi-Impiombato A."/>
            <person name="Apweiler R."/>
            <person name="Aturaliya R.N."/>
            <person name="Bailey T.L."/>
            <person name="Bansal M."/>
            <person name="Baxter L."/>
            <person name="Beisel K.W."/>
            <person name="Bersano T."/>
            <person name="Bono H."/>
            <person name="Chalk A.M."/>
            <person name="Chiu K.P."/>
            <person name="Choudhary V."/>
            <person name="Christoffels A."/>
            <person name="Clutterbuck D.R."/>
            <person name="Crowe M.L."/>
            <person name="Dalla E."/>
            <person name="Dalrymple B.P."/>
            <person name="de Bono B."/>
            <person name="Della Gatta G."/>
            <person name="di Bernardo D."/>
            <person name="Down T."/>
            <person name="Engstrom P."/>
            <person name="Fagiolini M."/>
            <person name="Faulkner G."/>
            <person name="Fletcher C.F."/>
            <person name="Fukushima T."/>
            <person name="Furuno M."/>
            <person name="Futaki S."/>
            <person name="Gariboldi M."/>
            <person name="Georgii-Hemming P."/>
            <person name="Gingeras T.R."/>
            <person name="Gojobori T."/>
            <person name="Green R.E."/>
            <person name="Gustincich S."/>
            <person name="Harbers M."/>
            <person name="Hayashi Y."/>
            <person name="Hensch T.K."/>
            <person name="Hirokawa N."/>
            <person name="Hill D."/>
            <person name="Huminiecki L."/>
            <person name="Iacono M."/>
            <person name="Ikeo K."/>
            <person name="Iwama A."/>
            <person name="Ishikawa T."/>
            <person name="Jakt M."/>
            <person name="Kanapin A."/>
            <person name="Katoh M."/>
            <person name="Kawasawa Y."/>
            <person name="Kelso J."/>
            <person name="Kitamura H."/>
            <person name="Kitano H."/>
            <person name="Kollias G."/>
            <person name="Krishnan S.P."/>
            <person name="Kruger A."/>
            <person name="Kummerfeld S.K."/>
            <person name="Kurochkin I.V."/>
            <person name="Lareau L.F."/>
            <person name="Lazarevic D."/>
            <person name="Lipovich L."/>
            <person name="Liu J."/>
            <person name="Liuni S."/>
            <person name="McWilliam S."/>
            <person name="Madan Babu M."/>
            <person name="Madera M."/>
            <person name="Marchionni L."/>
            <person name="Matsuda H."/>
            <person name="Matsuzawa S."/>
            <person name="Miki H."/>
            <person name="Mignone F."/>
            <person name="Miyake S."/>
            <person name="Morris K."/>
            <person name="Mottagui-Tabar S."/>
            <person name="Mulder N."/>
            <person name="Nakano N."/>
            <person name="Nakauchi H."/>
            <person name="Ng P."/>
            <person name="Nilsson R."/>
            <person name="Nishiguchi S."/>
            <person name="Nishikawa S."/>
            <person name="Nori F."/>
            <person name="Ohara O."/>
            <person name="Okazaki Y."/>
            <person name="Orlando V."/>
            <person name="Pang K.C."/>
            <person name="Pavan W.J."/>
            <person name="Pavesi G."/>
            <person name="Pesole G."/>
            <person name="Petrovsky N."/>
            <person name="Piazza S."/>
            <person name="Reed J."/>
            <person name="Reid J.F."/>
            <person name="Ring B.Z."/>
            <person name="Ringwald M."/>
            <person name="Rost B."/>
            <person name="Ruan Y."/>
            <person name="Salzberg S.L."/>
            <person name="Sandelin A."/>
            <person name="Schneider C."/>
            <person name="Schoenbach C."/>
            <person name="Sekiguchi K."/>
            <person name="Semple C.A."/>
            <person name="Seno S."/>
            <person name="Sessa L."/>
            <person name="Sheng Y."/>
            <person name="Shibata Y."/>
            <person name="Shimada H."/>
            <person name="Shimada K."/>
            <person name="Silva D."/>
            <person name="Sinclair B."/>
            <person name="Sperling S."/>
            <person name="Stupka E."/>
            <person name="Sugiura K."/>
            <person name="Sultana R."/>
            <person name="Takenaka Y."/>
            <person name="Taki K."/>
            <person name="Tammoja K."/>
            <person name="Tan S.L."/>
            <person name="Tang S."/>
            <person name="Taylor M.S."/>
            <person name="Tegner J."/>
            <person name="Teichmann S.A."/>
            <person name="Ueda H.R."/>
            <person name="van Nimwegen E."/>
            <person name="Verardo R."/>
            <person name="Wei C.L."/>
            <person name="Yagi K."/>
            <person name="Yamanishi H."/>
            <person name="Zabarovsky E."/>
            <person name="Zhu S."/>
            <person name="Zimmer A."/>
            <person name="Hide W."/>
            <person name="Bult C."/>
            <person name="Grimmond S.M."/>
            <person name="Teasdale R.D."/>
            <person name="Liu E.T."/>
            <person name="Brusic V."/>
            <person name="Quackenbush J."/>
            <person name="Wahlestedt C."/>
            <person name="Mattick J.S."/>
            <person name="Hume D.A."/>
            <person name="Kai C."/>
            <person name="Sasaki D."/>
            <person name="Tomaru Y."/>
            <person name="Fukuda S."/>
            <person name="Kanamori-Katayama M."/>
            <person name="Suzuki M."/>
            <person name="Aoki J."/>
            <person name="Arakawa T."/>
            <person name="Iida J."/>
            <person name="Imamura K."/>
            <person name="Itoh M."/>
            <person name="Kato T."/>
            <person name="Kawaji H."/>
            <person name="Kawagashira N."/>
            <person name="Kawashima T."/>
            <person name="Kojima M."/>
            <person name="Kondo S."/>
            <person name="Konno H."/>
            <person name="Nakano K."/>
            <person name="Ninomiya N."/>
            <person name="Nishio T."/>
            <person name="Okada M."/>
            <person name="Plessy C."/>
            <person name="Shibata K."/>
            <person name="Shiraki T."/>
            <person name="Suzuki S."/>
            <person name="Tagami M."/>
            <person name="Waki K."/>
            <person name="Watahiki A."/>
            <person name="Okamura-Oho Y."/>
            <person name="Suzuki H."/>
            <person name="Kawai J."/>
            <person name="Hayashizaki Y."/>
        </authorList>
    </citation>
    <scope>NUCLEOTIDE SEQUENCE [LARGE SCALE MRNA]</scope>
    <source>
        <strain>C57BL/6J</strain>
        <tissue>Diencephalon</tissue>
    </source>
</reference>
<reference key="3">
    <citation type="journal article" date="2009" name="PLoS Biol.">
        <title>Lineage-specific biology revealed by a finished genome assembly of the mouse.</title>
        <authorList>
            <person name="Church D.M."/>
            <person name="Goodstadt L."/>
            <person name="Hillier L.W."/>
            <person name="Zody M.C."/>
            <person name="Goldstein S."/>
            <person name="She X."/>
            <person name="Bult C.J."/>
            <person name="Agarwala R."/>
            <person name="Cherry J.L."/>
            <person name="DiCuccio M."/>
            <person name="Hlavina W."/>
            <person name="Kapustin Y."/>
            <person name="Meric P."/>
            <person name="Maglott D."/>
            <person name="Birtle Z."/>
            <person name="Marques A.C."/>
            <person name="Graves T."/>
            <person name="Zhou S."/>
            <person name="Teague B."/>
            <person name="Potamousis K."/>
            <person name="Churas C."/>
            <person name="Place M."/>
            <person name="Herschleb J."/>
            <person name="Runnheim R."/>
            <person name="Forrest D."/>
            <person name="Amos-Landgraf J."/>
            <person name="Schwartz D.C."/>
            <person name="Cheng Z."/>
            <person name="Lindblad-Toh K."/>
            <person name="Eichler E.E."/>
            <person name="Ponting C.P."/>
        </authorList>
    </citation>
    <scope>NUCLEOTIDE SEQUENCE [LARGE SCALE GENOMIC DNA]</scope>
    <source>
        <strain>C57BL/6J</strain>
    </source>
</reference>
<reference key="4">
    <citation type="journal article" date="2004" name="Genome Res.">
        <title>The status, quality, and expansion of the NIH full-length cDNA project: the Mammalian Gene Collection (MGC).</title>
        <authorList>
            <consortium name="The MGC Project Team"/>
        </authorList>
    </citation>
    <scope>NUCLEOTIDE SEQUENCE [LARGE SCALE MRNA]</scope>
    <source>
        <strain>FVB/N</strain>
        <tissue>Mammary tumor</tissue>
    </source>
</reference>
<reference key="5">
    <citation type="journal article" date="2009" name="FASEB J.">
        <title>Sushi repeat protein X-linked 2, a novel mediator of angiogenesis.</title>
        <authorList>
            <person name="Miljkovic-Licina M."/>
            <person name="Hammel P."/>
            <person name="Garrido-Urbani S."/>
            <person name="Bradfield P.F."/>
            <person name="Szepetowski P."/>
            <person name="Imhof B.A."/>
        </authorList>
    </citation>
    <scope>FUNCTION</scope>
    <scope>INTERACTION WITH PLAUR</scope>
    <scope>TISSUE SPECIFICITY</scope>
</reference>
<reference key="6">
    <citation type="journal article" date="2013" name="Science">
        <title>The human language-associated gene SRPX2 regulates synapse formation and vocalization in mice.</title>
        <authorList>
            <person name="Sia G.M."/>
            <person name="Clem R.L."/>
            <person name="Huganir R.L."/>
        </authorList>
    </citation>
    <scope>FUNCTION</scope>
</reference>